<gene>
    <name evidence="1" type="primary">leuC2</name>
    <name type="ordered locus">MS0596</name>
</gene>
<reference key="1">
    <citation type="journal article" date="2004" name="Nat. Biotechnol.">
        <title>The genome sequence of the capnophilic rumen bacterium Mannheimia succiniciproducens.</title>
        <authorList>
            <person name="Hong S.H."/>
            <person name="Kim J.S."/>
            <person name="Lee S.Y."/>
            <person name="In Y.H."/>
            <person name="Choi S.S."/>
            <person name="Rih J.-K."/>
            <person name="Kim C.H."/>
            <person name="Jeong H."/>
            <person name="Hur C.G."/>
            <person name="Kim J.J."/>
        </authorList>
    </citation>
    <scope>NUCLEOTIDE SEQUENCE [LARGE SCALE GENOMIC DNA]</scope>
    <source>
        <strain>KCTC 0769BP / MBEL55E</strain>
    </source>
</reference>
<accession>Q65V07</accession>
<sequence>MAKTLYQKLFDAHVVYEAEGETPILYINRHLIHEVTSPQAFDGLRVAGRQVRQVSKTFGTMDHSISTQVRDVNKLEGQAKIQVLELDKNCKATGISLFDMNTKEQGIVHVMGPEQGLTLPGMTIVCGDSHTATHGAFGALAFGIGTSEVEHVLATQTLKQARAKSMKVEVRGKVNPGITAKDIVLAIIGKTTMAGGTGHVVEFCGEAIRDLSMEGRMTVCNMAIEFGAKAGLVAPDETTFEYLKGRPHAPKGKDWDDAVAYWKTLKSDEDAQFDTVVVLEAKDIAPQVTWGTNPGQVIGIDQLVPNPAEMTDPVTKASAEKALAYIGLEPNTDLKNVPVDQVFIGSCTNSRIEDLRAAAAVMKGRKKADNVKRVLVVPGSGLVKEQAEKEGLDKIFLAAGAEWRNPGCSMCLGMNDDRLGEWERCASTSNRNFEGRQGRNGRTHLVSPAMAAAAAVFGKFVDIRNVSLN</sequence>
<evidence type="ECO:0000255" key="1">
    <source>
        <dbReference type="HAMAP-Rule" id="MF_01026"/>
    </source>
</evidence>
<proteinExistence type="inferred from homology"/>
<feature type="chain" id="PRO_0000076761" description="3-isopropylmalate dehydratase large subunit 2">
    <location>
        <begin position="1"/>
        <end position="469"/>
    </location>
</feature>
<feature type="binding site" evidence="1">
    <location>
        <position position="347"/>
    </location>
    <ligand>
        <name>[4Fe-4S] cluster</name>
        <dbReference type="ChEBI" id="CHEBI:49883"/>
    </ligand>
</feature>
<feature type="binding site" evidence="1">
    <location>
        <position position="408"/>
    </location>
    <ligand>
        <name>[4Fe-4S] cluster</name>
        <dbReference type="ChEBI" id="CHEBI:49883"/>
    </ligand>
</feature>
<feature type="binding site" evidence="1">
    <location>
        <position position="411"/>
    </location>
    <ligand>
        <name>[4Fe-4S] cluster</name>
        <dbReference type="ChEBI" id="CHEBI:49883"/>
    </ligand>
</feature>
<keyword id="KW-0004">4Fe-4S</keyword>
<keyword id="KW-0028">Amino-acid biosynthesis</keyword>
<keyword id="KW-0100">Branched-chain amino acid biosynthesis</keyword>
<keyword id="KW-0408">Iron</keyword>
<keyword id="KW-0411">Iron-sulfur</keyword>
<keyword id="KW-0432">Leucine biosynthesis</keyword>
<keyword id="KW-0456">Lyase</keyword>
<keyword id="KW-0479">Metal-binding</keyword>
<protein>
    <recommendedName>
        <fullName evidence="1">3-isopropylmalate dehydratase large subunit 2</fullName>
        <ecNumber evidence="1">4.2.1.33</ecNumber>
    </recommendedName>
    <alternativeName>
        <fullName evidence="1">Alpha-IPM isomerase 2</fullName>
        <shortName evidence="1">IPMI 2</shortName>
    </alternativeName>
    <alternativeName>
        <fullName evidence="1">Isopropylmalate isomerase 2</fullName>
    </alternativeName>
</protein>
<dbReference type="EC" id="4.2.1.33" evidence="1"/>
<dbReference type="EMBL" id="AE016827">
    <property type="protein sequence ID" value="AAU37203.1"/>
    <property type="molecule type" value="Genomic_DNA"/>
</dbReference>
<dbReference type="RefSeq" id="WP_011199775.1">
    <property type="nucleotide sequence ID" value="NC_006300.1"/>
</dbReference>
<dbReference type="SMR" id="Q65V07"/>
<dbReference type="STRING" id="221988.MS0596"/>
<dbReference type="KEGG" id="msu:MS0596"/>
<dbReference type="eggNOG" id="COG0065">
    <property type="taxonomic scope" value="Bacteria"/>
</dbReference>
<dbReference type="HOGENOM" id="CLU_006714_3_4_6"/>
<dbReference type="OrthoDB" id="9802769at2"/>
<dbReference type="UniPathway" id="UPA00048">
    <property type="reaction ID" value="UER00071"/>
</dbReference>
<dbReference type="Proteomes" id="UP000000607">
    <property type="component" value="Chromosome"/>
</dbReference>
<dbReference type="GO" id="GO:0003861">
    <property type="term" value="F:3-isopropylmalate dehydratase activity"/>
    <property type="evidence" value="ECO:0007669"/>
    <property type="project" value="UniProtKB-UniRule"/>
</dbReference>
<dbReference type="GO" id="GO:0051539">
    <property type="term" value="F:4 iron, 4 sulfur cluster binding"/>
    <property type="evidence" value="ECO:0007669"/>
    <property type="project" value="UniProtKB-KW"/>
</dbReference>
<dbReference type="GO" id="GO:0046872">
    <property type="term" value="F:metal ion binding"/>
    <property type="evidence" value="ECO:0007669"/>
    <property type="project" value="UniProtKB-KW"/>
</dbReference>
<dbReference type="GO" id="GO:0009098">
    <property type="term" value="P:L-leucine biosynthetic process"/>
    <property type="evidence" value="ECO:0007669"/>
    <property type="project" value="UniProtKB-UniRule"/>
</dbReference>
<dbReference type="CDD" id="cd01583">
    <property type="entry name" value="IPMI"/>
    <property type="match status" value="1"/>
</dbReference>
<dbReference type="FunFam" id="3.30.499.10:FF:000006">
    <property type="entry name" value="3-isopropylmalate dehydratase large subunit"/>
    <property type="match status" value="1"/>
</dbReference>
<dbReference type="FunFam" id="3.30.499.10:FF:000007">
    <property type="entry name" value="3-isopropylmalate dehydratase large subunit"/>
    <property type="match status" value="1"/>
</dbReference>
<dbReference type="Gene3D" id="3.30.499.10">
    <property type="entry name" value="Aconitase, domain 3"/>
    <property type="match status" value="2"/>
</dbReference>
<dbReference type="HAMAP" id="MF_01026">
    <property type="entry name" value="LeuC_type1"/>
    <property type="match status" value="1"/>
</dbReference>
<dbReference type="InterPro" id="IPR004430">
    <property type="entry name" value="3-IsopropMal_deHydase_lsu"/>
</dbReference>
<dbReference type="InterPro" id="IPR015931">
    <property type="entry name" value="Acnase/IPM_dHydase_lsu_aba_1/3"/>
</dbReference>
<dbReference type="InterPro" id="IPR001030">
    <property type="entry name" value="Acoase/IPM_deHydtase_lsu_aba"/>
</dbReference>
<dbReference type="InterPro" id="IPR018136">
    <property type="entry name" value="Aconitase_4Fe-4S_BS"/>
</dbReference>
<dbReference type="InterPro" id="IPR036008">
    <property type="entry name" value="Aconitase_4Fe-4S_dom"/>
</dbReference>
<dbReference type="InterPro" id="IPR050067">
    <property type="entry name" value="IPM_dehydratase_rel_enz"/>
</dbReference>
<dbReference type="InterPro" id="IPR033941">
    <property type="entry name" value="IPMI_cat"/>
</dbReference>
<dbReference type="NCBIfam" id="TIGR00170">
    <property type="entry name" value="leuC"/>
    <property type="match status" value="1"/>
</dbReference>
<dbReference type="NCBIfam" id="NF004016">
    <property type="entry name" value="PRK05478.1"/>
    <property type="match status" value="1"/>
</dbReference>
<dbReference type="NCBIfam" id="NF009116">
    <property type="entry name" value="PRK12466.1"/>
    <property type="match status" value="1"/>
</dbReference>
<dbReference type="PANTHER" id="PTHR43822:SF9">
    <property type="entry name" value="3-ISOPROPYLMALATE DEHYDRATASE"/>
    <property type="match status" value="1"/>
</dbReference>
<dbReference type="PANTHER" id="PTHR43822">
    <property type="entry name" value="HOMOACONITASE, MITOCHONDRIAL-RELATED"/>
    <property type="match status" value="1"/>
</dbReference>
<dbReference type="Pfam" id="PF00330">
    <property type="entry name" value="Aconitase"/>
    <property type="match status" value="1"/>
</dbReference>
<dbReference type="PRINTS" id="PR00415">
    <property type="entry name" value="ACONITASE"/>
</dbReference>
<dbReference type="SUPFAM" id="SSF53732">
    <property type="entry name" value="Aconitase iron-sulfur domain"/>
    <property type="match status" value="1"/>
</dbReference>
<dbReference type="PROSITE" id="PS00450">
    <property type="entry name" value="ACONITASE_1"/>
    <property type="match status" value="1"/>
</dbReference>
<dbReference type="PROSITE" id="PS01244">
    <property type="entry name" value="ACONITASE_2"/>
    <property type="match status" value="1"/>
</dbReference>
<name>LEUC2_MANSM</name>
<comment type="function">
    <text evidence="1">Catalyzes the isomerization between 2-isopropylmalate and 3-isopropylmalate, via the formation of 2-isopropylmaleate.</text>
</comment>
<comment type="catalytic activity">
    <reaction evidence="1">
        <text>(2R,3S)-3-isopropylmalate = (2S)-2-isopropylmalate</text>
        <dbReference type="Rhea" id="RHEA:32287"/>
        <dbReference type="ChEBI" id="CHEBI:1178"/>
        <dbReference type="ChEBI" id="CHEBI:35121"/>
        <dbReference type="EC" id="4.2.1.33"/>
    </reaction>
</comment>
<comment type="cofactor">
    <cofactor evidence="1">
        <name>[4Fe-4S] cluster</name>
        <dbReference type="ChEBI" id="CHEBI:49883"/>
    </cofactor>
    <text evidence="1">Binds 1 [4Fe-4S] cluster per subunit.</text>
</comment>
<comment type="pathway">
    <text evidence="1">Amino-acid biosynthesis; L-leucine biosynthesis; L-leucine from 3-methyl-2-oxobutanoate: step 2/4.</text>
</comment>
<comment type="subunit">
    <text evidence="1">Heterodimer of LeuC and LeuD.</text>
</comment>
<comment type="similarity">
    <text evidence="1">Belongs to the aconitase/IPM isomerase family. LeuC type 1 subfamily.</text>
</comment>
<organism>
    <name type="scientific">Mannheimia succiniciproducens (strain KCTC 0769BP / MBEL55E)</name>
    <dbReference type="NCBI Taxonomy" id="221988"/>
    <lineage>
        <taxon>Bacteria</taxon>
        <taxon>Pseudomonadati</taxon>
        <taxon>Pseudomonadota</taxon>
        <taxon>Gammaproteobacteria</taxon>
        <taxon>Pasteurellales</taxon>
        <taxon>Pasteurellaceae</taxon>
        <taxon>Basfia</taxon>
    </lineage>
</organism>